<gene>
    <name evidence="1" type="primary">rpsK</name>
    <name type="ordered locus">BceJ2315_02610</name>
    <name type="ORF">BCAL0258</name>
</gene>
<comment type="function">
    <text evidence="1">Located on the platform of the 30S subunit, it bridges several disparate RNA helices of the 16S rRNA. Forms part of the Shine-Dalgarno cleft in the 70S ribosome.</text>
</comment>
<comment type="subunit">
    <text evidence="1">Part of the 30S ribosomal subunit. Interacts with proteins S7 and S18. Binds to IF-3.</text>
</comment>
<comment type="similarity">
    <text evidence="1">Belongs to the universal ribosomal protein uS11 family.</text>
</comment>
<proteinExistence type="inferred from homology"/>
<organism>
    <name type="scientific">Burkholderia cenocepacia (strain ATCC BAA-245 / DSM 16553 / LMG 16656 / NCTC 13227 / J2315 / CF5610)</name>
    <name type="common">Burkholderia cepacia (strain J2315)</name>
    <dbReference type="NCBI Taxonomy" id="216591"/>
    <lineage>
        <taxon>Bacteria</taxon>
        <taxon>Pseudomonadati</taxon>
        <taxon>Pseudomonadota</taxon>
        <taxon>Betaproteobacteria</taxon>
        <taxon>Burkholderiales</taxon>
        <taxon>Burkholderiaceae</taxon>
        <taxon>Burkholderia</taxon>
        <taxon>Burkholderia cepacia complex</taxon>
    </lineage>
</organism>
<protein>
    <recommendedName>
        <fullName evidence="1">Small ribosomal subunit protein uS11</fullName>
    </recommendedName>
    <alternativeName>
        <fullName evidence="2">30S ribosomal protein S11</fullName>
    </alternativeName>
</protein>
<accession>B4E5E4</accession>
<sequence>MAKASNTAAQRVRKKVKKNVAEGVVHVHASFNNTIITITDRQGNALAWATSGGQGFKGSRKSTPFAAQVAAESAGRVAMEYGVKNLEVRIKGPGPGRESAVRALHGLGIKITAISDVTPIPHNGCRPPKRRRI</sequence>
<name>RS11_BURCJ</name>
<dbReference type="EMBL" id="AM747720">
    <property type="protein sequence ID" value="CAR50569.1"/>
    <property type="molecule type" value="Genomic_DNA"/>
</dbReference>
<dbReference type="RefSeq" id="WP_004197937.1">
    <property type="nucleotide sequence ID" value="NC_011000.1"/>
</dbReference>
<dbReference type="SMR" id="B4E5E4"/>
<dbReference type="GeneID" id="98107136"/>
<dbReference type="KEGG" id="bcj:BCAL0258"/>
<dbReference type="eggNOG" id="COG0100">
    <property type="taxonomic scope" value="Bacteria"/>
</dbReference>
<dbReference type="HOGENOM" id="CLU_072439_5_0_4"/>
<dbReference type="BioCyc" id="BCEN216591:G1G1V-301-MONOMER"/>
<dbReference type="Proteomes" id="UP000001035">
    <property type="component" value="Chromosome 1"/>
</dbReference>
<dbReference type="GO" id="GO:1990904">
    <property type="term" value="C:ribonucleoprotein complex"/>
    <property type="evidence" value="ECO:0007669"/>
    <property type="project" value="UniProtKB-KW"/>
</dbReference>
<dbReference type="GO" id="GO:0005840">
    <property type="term" value="C:ribosome"/>
    <property type="evidence" value="ECO:0007669"/>
    <property type="project" value="UniProtKB-KW"/>
</dbReference>
<dbReference type="GO" id="GO:0019843">
    <property type="term" value="F:rRNA binding"/>
    <property type="evidence" value="ECO:0007669"/>
    <property type="project" value="UniProtKB-UniRule"/>
</dbReference>
<dbReference type="GO" id="GO:0003735">
    <property type="term" value="F:structural constituent of ribosome"/>
    <property type="evidence" value="ECO:0007669"/>
    <property type="project" value="InterPro"/>
</dbReference>
<dbReference type="GO" id="GO:0006412">
    <property type="term" value="P:translation"/>
    <property type="evidence" value="ECO:0007669"/>
    <property type="project" value="UniProtKB-UniRule"/>
</dbReference>
<dbReference type="FunFam" id="3.30.420.80:FF:000001">
    <property type="entry name" value="30S ribosomal protein S11"/>
    <property type="match status" value="1"/>
</dbReference>
<dbReference type="Gene3D" id="3.30.420.80">
    <property type="entry name" value="Ribosomal protein S11"/>
    <property type="match status" value="1"/>
</dbReference>
<dbReference type="HAMAP" id="MF_01310">
    <property type="entry name" value="Ribosomal_uS11"/>
    <property type="match status" value="1"/>
</dbReference>
<dbReference type="InterPro" id="IPR001971">
    <property type="entry name" value="Ribosomal_uS11"/>
</dbReference>
<dbReference type="InterPro" id="IPR019981">
    <property type="entry name" value="Ribosomal_uS11_bac-type"/>
</dbReference>
<dbReference type="InterPro" id="IPR018102">
    <property type="entry name" value="Ribosomal_uS11_CS"/>
</dbReference>
<dbReference type="InterPro" id="IPR036967">
    <property type="entry name" value="Ribosomal_uS11_sf"/>
</dbReference>
<dbReference type="NCBIfam" id="NF003698">
    <property type="entry name" value="PRK05309.1"/>
    <property type="match status" value="1"/>
</dbReference>
<dbReference type="NCBIfam" id="TIGR03632">
    <property type="entry name" value="uS11_bact"/>
    <property type="match status" value="1"/>
</dbReference>
<dbReference type="PANTHER" id="PTHR11759">
    <property type="entry name" value="40S RIBOSOMAL PROTEIN S14/30S RIBOSOMAL PROTEIN S11"/>
    <property type="match status" value="1"/>
</dbReference>
<dbReference type="Pfam" id="PF00411">
    <property type="entry name" value="Ribosomal_S11"/>
    <property type="match status" value="1"/>
</dbReference>
<dbReference type="PIRSF" id="PIRSF002131">
    <property type="entry name" value="Ribosomal_S11"/>
    <property type="match status" value="1"/>
</dbReference>
<dbReference type="SUPFAM" id="SSF53137">
    <property type="entry name" value="Translational machinery components"/>
    <property type="match status" value="1"/>
</dbReference>
<dbReference type="PROSITE" id="PS00054">
    <property type="entry name" value="RIBOSOMAL_S11"/>
    <property type="match status" value="1"/>
</dbReference>
<reference key="1">
    <citation type="journal article" date="2009" name="J. Bacteriol.">
        <title>The genome of Burkholderia cenocepacia J2315, an epidemic pathogen of cystic fibrosis patients.</title>
        <authorList>
            <person name="Holden M.T."/>
            <person name="Seth-Smith H.M."/>
            <person name="Crossman L.C."/>
            <person name="Sebaihia M."/>
            <person name="Bentley S.D."/>
            <person name="Cerdeno-Tarraga A.M."/>
            <person name="Thomson N.R."/>
            <person name="Bason N."/>
            <person name="Quail M.A."/>
            <person name="Sharp S."/>
            <person name="Cherevach I."/>
            <person name="Churcher C."/>
            <person name="Goodhead I."/>
            <person name="Hauser H."/>
            <person name="Holroyd N."/>
            <person name="Mungall K."/>
            <person name="Scott P."/>
            <person name="Walker D."/>
            <person name="White B."/>
            <person name="Rose H."/>
            <person name="Iversen P."/>
            <person name="Mil-Homens D."/>
            <person name="Rocha E.P."/>
            <person name="Fialho A.M."/>
            <person name="Baldwin A."/>
            <person name="Dowson C."/>
            <person name="Barrell B.G."/>
            <person name="Govan J.R."/>
            <person name="Vandamme P."/>
            <person name="Hart C.A."/>
            <person name="Mahenthiralingam E."/>
            <person name="Parkhill J."/>
        </authorList>
    </citation>
    <scope>NUCLEOTIDE SEQUENCE [LARGE SCALE GENOMIC DNA]</scope>
    <source>
        <strain>ATCC BAA-245 / DSM 16553 / LMG 16656 / NCTC 13227 / J2315 / CF5610</strain>
    </source>
</reference>
<keyword id="KW-0687">Ribonucleoprotein</keyword>
<keyword id="KW-0689">Ribosomal protein</keyword>
<keyword id="KW-0694">RNA-binding</keyword>
<keyword id="KW-0699">rRNA-binding</keyword>
<feature type="chain" id="PRO_1000141063" description="Small ribosomal subunit protein uS11">
    <location>
        <begin position="1"/>
        <end position="133"/>
    </location>
</feature>
<evidence type="ECO:0000255" key="1">
    <source>
        <dbReference type="HAMAP-Rule" id="MF_01310"/>
    </source>
</evidence>
<evidence type="ECO:0000305" key="2"/>